<feature type="chain" id="PRO_1000134747" description="Tetraacyldisaccharide 4'-kinase">
    <location>
        <begin position="1"/>
        <end position="326"/>
    </location>
</feature>
<feature type="binding site" evidence="1">
    <location>
        <begin position="52"/>
        <end position="59"/>
    </location>
    <ligand>
        <name>ATP</name>
        <dbReference type="ChEBI" id="CHEBI:30616"/>
    </ligand>
</feature>
<sequence>MRPPAFWAAGPDHPAARGLGPLGAVYGALAARRMDRPGARAGCPVLCLGNFTLGGAGKTPAALAVAALVAELGAAPAFLSRGYGGRLAGPVRVDPAHHAAAEVGDEPLLLARRAPAVVARDRPAGAALCRSLGADVIVMDDGLQNPSLAKDLSLAVVDGPAGLGNGLPFPAGPLRAPLARQWPHVGGLIVIGNGAGGDAVARAAERRGLPVHGARLVREADDLAGRRCLAFAGIGRPEKFYATLAEAGAVIVGTRPYPDHHPYRARELAALAEAARRLDAELVTTEKDAVRLPRAFAAGVRVLRVRLAFDDAEALRRQIRGALGAP</sequence>
<dbReference type="EC" id="2.7.1.130" evidence="1"/>
<dbReference type="EMBL" id="CP001001">
    <property type="protein sequence ID" value="ACB22898.1"/>
    <property type="molecule type" value="Genomic_DNA"/>
</dbReference>
<dbReference type="RefSeq" id="WP_012317891.1">
    <property type="nucleotide sequence ID" value="NC_010505.1"/>
</dbReference>
<dbReference type="SMR" id="B1LYS1"/>
<dbReference type="STRING" id="426355.Mrad2831_0888"/>
<dbReference type="GeneID" id="6136904"/>
<dbReference type="KEGG" id="mrd:Mrad2831_0888"/>
<dbReference type="eggNOG" id="COG1663">
    <property type="taxonomic scope" value="Bacteria"/>
</dbReference>
<dbReference type="HOGENOM" id="CLU_038816_0_0_5"/>
<dbReference type="OrthoDB" id="9766423at2"/>
<dbReference type="UniPathway" id="UPA00359">
    <property type="reaction ID" value="UER00482"/>
</dbReference>
<dbReference type="Proteomes" id="UP000006589">
    <property type="component" value="Chromosome"/>
</dbReference>
<dbReference type="GO" id="GO:0005886">
    <property type="term" value="C:plasma membrane"/>
    <property type="evidence" value="ECO:0007669"/>
    <property type="project" value="TreeGrafter"/>
</dbReference>
<dbReference type="GO" id="GO:0005524">
    <property type="term" value="F:ATP binding"/>
    <property type="evidence" value="ECO:0007669"/>
    <property type="project" value="UniProtKB-UniRule"/>
</dbReference>
<dbReference type="GO" id="GO:0009029">
    <property type="term" value="F:tetraacyldisaccharide 4'-kinase activity"/>
    <property type="evidence" value="ECO:0007669"/>
    <property type="project" value="UniProtKB-UniRule"/>
</dbReference>
<dbReference type="GO" id="GO:0009245">
    <property type="term" value="P:lipid A biosynthetic process"/>
    <property type="evidence" value="ECO:0007669"/>
    <property type="project" value="UniProtKB-UniRule"/>
</dbReference>
<dbReference type="GO" id="GO:0009244">
    <property type="term" value="P:lipopolysaccharide core region biosynthetic process"/>
    <property type="evidence" value="ECO:0007669"/>
    <property type="project" value="TreeGrafter"/>
</dbReference>
<dbReference type="HAMAP" id="MF_00409">
    <property type="entry name" value="LpxK"/>
    <property type="match status" value="1"/>
</dbReference>
<dbReference type="InterPro" id="IPR003758">
    <property type="entry name" value="LpxK"/>
</dbReference>
<dbReference type="InterPro" id="IPR027417">
    <property type="entry name" value="P-loop_NTPase"/>
</dbReference>
<dbReference type="NCBIfam" id="TIGR00682">
    <property type="entry name" value="lpxK"/>
    <property type="match status" value="1"/>
</dbReference>
<dbReference type="PANTHER" id="PTHR42724">
    <property type="entry name" value="TETRAACYLDISACCHARIDE 4'-KINASE"/>
    <property type="match status" value="1"/>
</dbReference>
<dbReference type="PANTHER" id="PTHR42724:SF1">
    <property type="entry name" value="TETRAACYLDISACCHARIDE 4'-KINASE, MITOCHONDRIAL-RELATED"/>
    <property type="match status" value="1"/>
</dbReference>
<dbReference type="Pfam" id="PF02606">
    <property type="entry name" value="LpxK"/>
    <property type="match status" value="1"/>
</dbReference>
<dbReference type="SUPFAM" id="SSF52540">
    <property type="entry name" value="P-loop containing nucleoside triphosphate hydrolases"/>
    <property type="match status" value="1"/>
</dbReference>
<reference key="1">
    <citation type="submission" date="2008-03" db="EMBL/GenBank/DDBJ databases">
        <title>Complete sequence of chromosome of Methylobacterium radiotolerans JCM 2831.</title>
        <authorList>
            <consortium name="US DOE Joint Genome Institute"/>
            <person name="Copeland A."/>
            <person name="Lucas S."/>
            <person name="Lapidus A."/>
            <person name="Glavina del Rio T."/>
            <person name="Dalin E."/>
            <person name="Tice H."/>
            <person name="Bruce D."/>
            <person name="Goodwin L."/>
            <person name="Pitluck S."/>
            <person name="Kiss H."/>
            <person name="Brettin T."/>
            <person name="Detter J.C."/>
            <person name="Han C."/>
            <person name="Kuske C.R."/>
            <person name="Schmutz J."/>
            <person name="Larimer F."/>
            <person name="Land M."/>
            <person name="Hauser L."/>
            <person name="Kyrpides N."/>
            <person name="Mikhailova N."/>
            <person name="Marx C.J."/>
            <person name="Richardson P."/>
        </authorList>
    </citation>
    <scope>NUCLEOTIDE SEQUENCE [LARGE SCALE GENOMIC DNA]</scope>
    <source>
        <strain>ATCC 27329 / DSM 1819 / JCM 2831 / NBRC 15690 / NCIMB 10815 / 0-1</strain>
    </source>
</reference>
<evidence type="ECO:0000255" key="1">
    <source>
        <dbReference type="HAMAP-Rule" id="MF_00409"/>
    </source>
</evidence>
<accession>B1LYS1</accession>
<organism>
    <name type="scientific">Methylobacterium radiotolerans (strain ATCC 27329 / DSM 1819 / JCM 2831 / NBRC 15690 / NCIMB 10815 / 0-1)</name>
    <dbReference type="NCBI Taxonomy" id="426355"/>
    <lineage>
        <taxon>Bacteria</taxon>
        <taxon>Pseudomonadati</taxon>
        <taxon>Pseudomonadota</taxon>
        <taxon>Alphaproteobacteria</taxon>
        <taxon>Hyphomicrobiales</taxon>
        <taxon>Methylobacteriaceae</taxon>
        <taxon>Methylobacterium</taxon>
    </lineage>
</organism>
<proteinExistence type="inferred from homology"/>
<keyword id="KW-0067">ATP-binding</keyword>
<keyword id="KW-0418">Kinase</keyword>
<keyword id="KW-0441">Lipid A biosynthesis</keyword>
<keyword id="KW-0444">Lipid biosynthesis</keyword>
<keyword id="KW-0443">Lipid metabolism</keyword>
<keyword id="KW-0547">Nucleotide-binding</keyword>
<keyword id="KW-0808">Transferase</keyword>
<comment type="function">
    <text evidence="1">Transfers the gamma-phosphate of ATP to the 4'-position of a tetraacyldisaccharide 1-phosphate intermediate (termed DS-1-P) to form tetraacyldisaccharide 1,4'-bis-phosphate (lipid IVA).</text>
</comment>
<comment type="catalytic activity">
    <reaction evidence="1">
        <text>a lipid A disaccharide + ATP = a lipid IVA + ADP + H(+)</text>
        <dbReference type="Rhea" id="RHEA:67840"/>
        <dbReference type="ChEBI" id="CHEBI:15378"/>
        <dbReference type="ChEBI" id="CHEBI:30616"/>
        <dbReference type="ChEBI" id="CHEBI:176343"/>
        <dbReference type="ChEBI" id="CHEBI:176425"/>
        <dbReference type="ChEBI" id="CHEBI:456216"/>
        <dbReference type="EC" id="2.7.1.130"/>
    </reaction>
</comment>
<comment type="pathway">
    <text evidence="1">Glycolipid biosynthesis; lipid IV(A) biosynthesis; lipid IV(A) from (3R)-3-hydroxytetradecanoyl-[acyl-carrier-protein] and UDP-N-acetyl-alpha-D-glucosamine: step 6/6.</text>
</comment>
<comment type="similarity">
    <text evidence="1">Belongs to the LpxK family.</text>
</comment>
<gene>
    <name evidence="1" type="primary">lpxK</name>
    <name type="ordered locus">Mrad2831_0888</name>
</gene>
<protein>
    <recommendedName>
        <fullName evidence="1">Tetraacyldisaccharide 4'-kinase</fullName>
        <ecNumber evidence="1">2.7.1.130</ecNumber>
    </recommendedName>
    <alternativeName>
        <fullName evidence="1">Lipid A 4'-kinase</fullName>
    </alternativeName>
</protein>
<name>LPXK_METRJ</name>